<feature type="chain" id="PRO_0000342517" description="Sentan">
    <location>
        <begin position="1"/>
        <end position="147"/>
    </location>
</feature>
<feature type="region of interest" description="Disordered" evidence="1">
    <location>
        <begin position="1"/>
        <end position="36"/>
    </location>
</feature>
<feature type="compositionally biased region" description="Basic and acidic residues" evidence="1">
    <location>
        <begin position="8"/>
        <end position="21"/>
    </location>
</feature>
<feature type="compositionally biased region" description="Low complexity" evidence="1">
    <location>
        <begin position="23"/>
        <end position="32"/>
    </location>
</feature>
<accession>Q8C9X1</accession>
<accession>B7FF66</accession>
<dbReference type="EMBL" id="AK040281">
    <property type="protein sequence ID" value="BAC30559.1"/>
    <property type="molecule type" value="mRNA"/>
</dbReference>
<dbReference type="EMBL" id="BC126945">
    <property type="protein sequence ID" value="AAI26946.1"/>
    <property type="molecule type" value="mRNA"/>
</dbReference>
<dbReference type="EMBL" id="BR000724">
    <property type="protein sequence ID" value="FAA00430.1"/>
    <property type="molecule type" value="mRNA"/>
</dbReference>
<dbReference type="CCDS" id="CCDS26822.1"/>
<dbReference type="RefSeq" id="NP_808292.1">
    <property type="nucleotide sequence ID" value="NM_177624.3"/>
</dbReference>
<dbReference type="SMR" id="Q8C9X1"/>
<dbReference type="FunCoup" id="Q8C9X1">
    <property type="interactions" value="40"/>
</dbReference>
<dbReference type="STRING" id="10090.ENSMUSP00000062092"/>
<dbReference type="PhosphoSitePlus" id="Q8C9X1"/>
<dbReference type="PaxDb" id="10090-ENSMUSP00000062092"/>
<dbReference type="ProteomicsDB" id="261535"/>
<dbReference type="Antibodypedia" id="50719">
    <property type="antibodies" value="16 antibodies from 6 providers"/>
</dbReference>
<dbReference type="DNASU" id="218739"/>
<dbReference type="Ensembl" id="ENSMUST00000061045.3">
    <property type="protein sequence ID" value="ENSMUSP00000062092.3"/>
    <property type="gene ID" value="ENSMUSG00000044772.3"/>
</dbReference>
<dbReference type="GeneID" id="218739"/>
<dbReference type="KEGG" id="mmu:218739"/>
<dbReference type="UCSC" id="uc007sgc.1">
    <property type="organism name" value="mouse"/>
</dbReference>
<dbReference type="AGR" id="MGI:3045373"/>
<dbReference type="CTD" id="132203"/>
<dbReference type="MGI" id="MGI:3045373">
    <property type="gene designation" value="Sntn"/>
</dbReference>
<dbReference type="VEuPathDB" id="HostDB:ENSMUSG00000044772"/>
<dbReference type="eggNOG" id="ENOG502S6AH">
    <property type="taxonomic scope" value="Eukaryota"/>
</dbReference>
<dbReference type="GeneTree" id="ENSGT00390000003322"/>
<dbReference type="HOGENOM" id="CLU_148109_0_0_1"/>
<dbReference type="InParanoid" id="Q8C9X1"/>
<dbReference type="OMA" id="MCGCRAS"/>
<dbReference type="OrthoDB" id="9362863at2759"/>
<dbReference type="PhylomeDB" id="Q8C9X1"/>
<dbReference type="TreeFam" id="TF335855"/>
<dbReference type="BioGRID-ORCS" id="218739">
    <property type="hits" value="2 hits in 79 CRISPR screens"/>
</dbReference>
<dbReference type="PRO" id="PR:Q8C9X1"/>
<dbReference type="Proteomes" id="UP000000589">
    <property type="component" value="Chromosome 14"/>
</dbReference>
<dbReference type="RNAct" id="Q8C9X1">
    <property type="molecule type" value="protein"/>
</dbReference>
<dbReference type="Bgee" id="ENSMUSG00000044772">
    <property type="expression patterns" value="Expressed in lung epithelium and 10 other cell types or tissues"/>
</dbReference>
<dbReference type="GO" id="GO:0005929">
    <property type="term" value="C:cilium"/>
    <property type="evidence" value="ECO:0000314"/>
    <property type="project" value="MGI"/>
</dbReference>
<dbReference type="GO" id="GO:0046914">
    <property type="term" value="F:transition metal ion binding"/>
    <property type="evidence" value="ECO:0007669"/>
    <property type="project" value="InterPro"/>
</dbReference>
<dbReference type="CDD" id="cd00213">
    <property type="entry name" value="S-100"/>
    <property type="match status" value="1"/>
</dbReference>
<dbReference type="Gene3D" id="1.10.238.10">
    <property type="entry name" value="EF-hand"/>
    <property type="match status" value="1"/>
</dbReference>
<dbReference type="InterPro" id="IPR011992">
    <property type="entry name" value="EF-hand-dom_pair"/>
</dbReference>
<dbReference type="InterPro" id="IPR034325">
    <property type="entry name" value="S-100_dom"/>
</dbReference>
<dbReference type="InterPro" id="IPR013787">
    <property type="entry name" value="S100_Ca-bd_sub"/>
</dbReference>
<dbReference type="PANTHER" id="PTHR11639:SF134">
    <property type="entry name" value="PROTEIN S100-A1-RELATED"/>
    <property type="match status" value="1"/>
</dbReference>
<dbReference type="PANTHER" id="PTHR11639">
    <property type="entry name" value="S100 CALCIUM-BINDING PROTEIN"/>
    <property type="match status" value="1"/>
</dbReference>
<dbReference type="Pfam" id="PF01023">
    <property type="entry name" value="S_100"/>
    <property type="match status" value="1"/>
</dbReference>
<dbReference type="SMART" id="SM01394">
    <property type="entry name" value="S_100"/>
    <property type="match status" value="1"/>
</dbReference>
<dbReference type="SUPFAM" id="SSF47473">
    <property type="entry name" value="EF-hand"/>
    <property type="match status" value="1"/>
</dbReference>
<sequence length="147" mass="16415">MGGCMHSTWDHALHSRGEPRPSEAPASISAPSKMPKSVSISKQLASIKALKKGSDLEKAIATIALVFRNASDPDGKLGKATAKKLLQTQFKKFTEREETKPKYQDILSELDEHTENKLDFEDFVILLLSLAIMSDLLRNMWNENTMK</sequence>
<name>SNTAN_MOUSE</name>
<keyword id="KW-0966">Cell projection</keyword>
<keyword id="KW-0969">Cilium</keyword>
<keyword id="KW-1185">Reference proteome</keyword>
<reference key="1">
    <citation type="journal article" date="2005" name="Science">
        <title>The transcriptional landscape of the mammalian genome.</title>
        <authorList>
            <person name="Carninci P."/>
            <person name="Kasukawa T."/>
            <person name="Katayama S."/>
            <person name="Gough J."/>
            <person name="Frith M.C."/>
            <person name="Maeda N."/>
            <person name="Oyama R."/>
            <person name="Ravasi T."/>
            <person name="Lenhard B."/>
            <person name="Wells C."/>
            <person name="Kodzius R."/>
            <person name="Shimokawa K."/>
            <person name="Bajic V.B."/>
            <person name="Brenner S.E."/>
            <person name="Batalov S."/>
            <person name="Forrest A.R."/>
            <person name="Zavolan M."/>
            <person name="Davis M.J."/>
            <person name="Wilming L.G."/>
            <person name="Aidinis V."/>
            <person name="Allen J.E."/>
            <person name="Ambesi-Impiombato A."/>
            <person name="Apweiler R."/>
            <person name="Aturaliya R.N."/>
            <person name="Bailey T.L."/>
            <person name="Bansal M."/>
            <person name="Baxter L."/>
            <person name="Beisel K.W."/>
            <person name="Bersano T."/>
            <person name="Bono H."/>
            <person name="Chalk A.M."/>
            <person name="Chiu K.P."/>
            <person name="Choudhary V."/>
            <person name="Christoffels A."/>
            <person name="Clutterbuck D.R."/>
            <person name="Crowe M.L."/>
            <person name="Dalla E."/>
            <person name="Dalrymple B.P."/>
            <person name="de Bono B."/>
            <person name="Della Gatta G."/>
            <person name="di Bernardo D."/>
            <person name="Down T."/>
            <person name="Engstrom P."/>
            <person name="Fagiolini M."/>
            <person name="Faulkner G."/>
            <person name="Fletcher C.F."/>
            <person name="Fukushima T."/>
            <person name="Furuno M."/>
            <person name="Futaki S."/>
            <person name="Gariboldi M."/>
            <person name="Georgii-Hemming P."/>
            <person name="Gingeras T.R."/>
            <person name="Gojobori T."/>
            <person name="Green R.E."/>
            <person name="Gustincich S."/>
            <person name="Harbers M."/>
            <person name="Hayashi Y."/>
            <person name="Hensch T.K."/>
            <person name="Hirokawa N."/>
            <person name="Hill D."/>
            <person name="Huminiecki L."/>
            <person name="Iacono M."/>
            <person name="Ikeo K."/>
            <person name="Iwama A."/>
            <person name="Ishikawa T."/>
            <person name="Jakt M."/>
            <person name="Kanapin A."/>
            <person name="Katoh M."/>
            <person name="Kawasawa Y."/>
            <person name="Kelso J."/>
            <person name="Kitamura H."/>
            <person name="Kitano H."/>
            <person name="Kollias G."/>
            <person name="Krishnan S.P."/>
            <person name="Kruger A."/>
            <person name="Kummerfeld S.K."/>
            <person name="Kurochkin I.V."/>
            <person name="Lareau L.F."/>
            <person name="Lazarevic D."/>
            <person name="Lipovich L."/>
            <person name="Liu J."/>
            <person name="Liuni S."/>
            <person name="McWilliam S."/>
            <person name="Madan Babu M."/>
            <person name="Madera M."/>
            <person name="Marchionni L."/>
            <person name="Matsuda H."/>
            <person name="Matsuzawa S."/>
            <person name="Miki H."/>
            <person name="Mignone F."/>
            <person name="Miyake S."/>
            <person name="Morris K."/>
            <person name="Mottagui-Tabar S."/>
            <person name="Mulder N."/>
            <person name="Nakano N."/>
            <person name="Nakauchi H."/>
            <person name="Ng P."/>
            <person name="Nilsson R."/>
            <person name="Nishiguchi S."/>
            <person name="Nishikawa S."/>
            <person name="Nori F."/>
            <person name="Ohara O."/>
            <person name="Okazaki Y."/>
            <person name="Orlando V."/>
            <person name="Pang K.C."/>
            <person name="Pavan W.J."/>
            <person name="Pavesi G."/>
            <person name="Pesole G."/>
            <person name="Petrovsky N."/>
            <person name="Piazza S."/>
            <person name="Reed J."/>
            <person name="Reid J.F."/>
            <person name="Ring B.Z."/>
            <person name="Ringwald M."/>
            <person name="Rost B."/>
            <person name="Ruan Y."/>
            <person name="Salzberg S.L."/>
            <person name="Sandelin A."/>
            <person name="Schneider C."/>
            <person name="Schoenbach C."/>
            <person name="Sekiguchi K."/>
            <person name="Semple C.A."/>
            <person name="Seno S."/>
            <person name="Sessa L."/>
            <person name="Sheng Y."/>
            <person name="Shibata Y."/>
            <person name="Shimada H."/>
            <person name="Shimada K."/>
            <person name="Silva D."/>
            <person name="Sinclair B."/>
            <person name="Sperling S."/>
            <person name="Stupka E."/>
            <person name="Sugiura K."/>
            <person name="Sultana R."/>
            <person name="Takenaka Y."/>
            <person name="Taki K."/>
            <person name="Tammoja K."/>
            <person name="Tan S.L."/>
            <person name="Tang S."/>
            <person name="Taylor M.S."/>
            <person name="Tegner J."/>
            <person name="Teichmann S.A."/>
            <person name="Ueda H.R."/>
            <person name="van Nimwegen E."/>
            <person name="Verardo R."/>
            <person name="Wei C.L."/>
            <person name="Yagi K."/>
            <person name="Yamanishi H."/>
            <person name="Zabarovsky E."/>
            <person name="Zhu S."/>
            <person name="Zimmer A."/>
            <person name="Hide W."/>
            <person name="Bult C."/>
            <person name="Grimmond S.M."/>
            <person name="Teasdale R.D."/>
            <person name="Liu E.T."/>
            <person name="Brusic V."/>
            <person name="Quackenbush J."/>
            <person name="Wahlestedt C."/>
            <person name="Mattick J.S."/>
            <person name="Hume D.A."/>
            <person name="Kai C."/>
            <person name="Sasaki D."/>
            <person name="Tomaru Y."/>
            <person name="Fukuda S."/>
            <person name="Kanamori-Katayama M."/>
            <person name="Suzuki M."/>
            <person name="Aoki J."/>
            <person name="Arakawa T."/>
            <person name="Iida J."/>
            <person name="Imamura K."/>
            <person name="Itoh M."/>
            <person name="Kato T."/>
            <person name="Kawaji H."/>
            <person name="Kawagashira N."/>
            <person name="Kawashima T."/>
            <person name="Kojima M."/>
            <person name="Kondo S."/>
            <person name="Konno H."/>
            <person name="Nakano K."/>
            <person name="Ninomiya N."/>
            <person name="Nishio T."/>
            <person name="Okada M."/>
            <person name="Plessy C."/>
            <person name="Shibata K."/>
            <person name="Shiraki T."/>
            <person name="Suzuki S."/>
            <person name="Tagami M."/>
            <person name="Waki K."/>
            <person name="Watahiki A."/>
            <person name="Okamura-Oho Y."/>
            <person name="Suzuki H."/>
            <person name="Kawai J."/>
            <person name="Hayashizaki Y."/>
        </authorList>
    </citation>
    <scope>NUCLEOTIDE SEQUENCE [LARGE SCALE MRNA]</scope>
    <source>
        <strain>C57BL/6J</strain>
        <tissue>Thymus</tissue>
    </source>
</reference>
<reference key="2">
    <citation type="journal article" date="2004" name="Genome Res.">
        <title>The status, quality, and expansion of the NIH full-length cDNA project: the Mammalian Gene Collection (MGC).</title>
        <authorList>
            <consortium name="The MGC Project Team"/>
        </authorList>
    </citation>
    <scope>NUCLEOTIDE SEQUENCE [LARGE SCALE MRNA]</scope>
</reference>
<reference key="3">
    <citation type="journal article" date="2008" name="Mol. Biol. Cell">
        <title>Sentan: a novel specific component of the apical structure of vertebrate motile cilia.</title>
        <authorList>
            <person name="Kubo A."/>
            <person name="Yuba-Kubo A."/>
            <person name="Tsukita S."/>
            <person name="Tsukita S."/>
            <person name="Amagai M."/>
        </authorList>
    </citation>
    <scope>IDENTIFICATION</scope>
    <scope>FUNCTION</scope>
    <scope>SUBCELLULAR LOCATION</scope>
    <scope>TISSUE SPECIFICITY</scope>
    <scope>DEVELOPMENTAL STAGE</scope>
</reference>
<evidence type="ECO:0000256" key="1">
    <source>
        <dbReference type="SAM" id="MobiDB-lite"/>
    </source>
</evidence>
<evidence type="ECO:0000269" key="2">
    <source>
    </source>
</evidence>
<evidence type="ECO:0000305" key="3"/>
<protein>
    <recommendedName>
        <fullName>Sentan</fullName>
    </recommendedName>
    <alternativeName>
        <fullName>Protein S100-A1-like</fullName>
    </alternativeName>
    <alternativeName>
        <fullName>S100 calcium-binding protein A1-like</fullName>
    </alternativeName>
</protein>
<gene>
    <name type="primary">Sntn</name>
    <name type="synonym">S100a1l</name>
</gene>
<comment type="function">
    <text evidence="2">May be a component of the linker structure that bridges the ciliary membrane and peripheral singlet microtubules.</text>
</comment>
<comment type="subcellular location">
    <subcellularLocation>
        <location evidence="2">Cell projection</location>
        <location evidence="2">Cilium</location>
    </subcellularLocation>
    <text>Expressed exclusively at the cilium tip where it localizes between the cell membrane and peripheral A-subfibers.</text>
</comment>
<comment type="tissue specificity">
    <text evidence="2">Expressed exclusively in ciliated epithelial cells. Detected in ciliated epithelium of trachea and oviduct (at protein level).</text>
</comment>
<comment type="developmental stage">
    <text evidence="2">Expression gradually increases during in vitro ciliogenesis.</text>
</comment>
<comment type="miscellaneous">
    <text>'Sentan' means 'tip' in Japanese.</text>
</comment>
<comment type="similarity">
    <text evidence="3">Belongs to the S-100 family.</text>
</comment>
<organism>
    <name type="scientific">Mus musculus</name>
    <name type="common">Mouse</name>
    <dbReference type="NCBI Taxonomy" id="10090"/>
    <lineage>
        <taxon>Eukaryota</taxon>
        <taxon>Metazoa</taxon>
        <taxon>Chordata</taxon>
        <taxon>Craniata</taxon>
        <taxon>Vertebrata</taxon>
        <taxon>Euteleostomi</taxon>
        <taxon>Mammalia</taxon>
        <taxon>Eutheria</taxon>
        <taxon>Euarchontoglires</taxon>
        <taxon>Glires</taxon>
        <taxon>Rodentia</taxon>
        <taxon>Myomorpha</taxon>
        <taxon>Muroidea</taxon>
        <taxon>Muridae</taxon>
        <taxon>Murinae</taxon>
        <taxon>Mus</taxon>
        <taxon>Mus</taxon>
    </lineage>
</organism>
<proteinExistence type="evidence at protein level"/>